<sequence>MENKYTHGVLFYHEHSGLKNINQGIGEVTTALSSICKHLSIQLSENEGDIIKYCQEIKTKNYAKDVDILFILGGDGTVNELINGVMSHDLQLPIGILPGGTFNDFTKTLNIAPNHKQASEQMISAQVGTYDVIKINNQYALNFVGLGLIVQNAENVQDGSKDIFGKLSYIGSTVKTLLNPTQFNYQLSIDDKTYSGETTMILTANGPFIGGSRIPLTDLSPQDGELNTFIFNEQSFSILNDIFKKRDSMNWNEITQGIEHIPGKKISLTTDPAMKVDIDGEISLETPIDIEVIPNAIQLLTVNDL</sequence>
<name>Y681_STAAN</name>
<reference key="1">
    <citation type="journal article" date="2001" name="Lancet">
        <title>Whole genome sequencing of meticillin-resistant Staphylococcus aureus.</title>
        <authorList>
            <person name="Kuroda M."/>
            <person name="Ohta T."/>
            <person name="Uchiyama I."/>
            <person name="Baba T."/>
            <person name="Yuzawa H."/>
            <person name="Kobayashi I."/>
            <person name="Cui L."/>
            <person name="Oguchi A."/>
            <person name="Aoki K."/>
            <person name="Nagai Y."/>
            <person name="Lian J.-Q."/>
            <person name="Ito T."/>
            <person name="Kanamori M."/>
            <person name="Matsumaru H."/>
            <person name="Maruyama A."/>
            <person name="Murakami H."/>
            <person name="Hosoyama A."/>
            <person name="Mizutani-Ui Y."/>
            <person name="Takahashi N.K."/>
            <person name="Sawano T."/>
            <person name="Inoue R."/>
            <person name="Kaito C."/>
            <person name="Sekimizu K."/>
            <person name="Hirakawa H."/>
            <person name="Kuhara S."/>
            <person name="Goto S."/>
            <person name="Yabuzaki J."/>
            <person name="Kanehisa M."/>
            <person name="Yamashita A."/>
            <person name="Oshima K."/>
            <person name="Furuya K."/>
            <person name="Yoshino C."/>
            <person name="Shiba T."/>
            <person name="Hattori M."/>
            <person name="Ogasawara N."/>
            <person name="Hayashi H."/>
            <person name="Hiramatsu K."/>
        </authorList>
    </citation>
    <scope>NUCLEOTIDE SEQUENCE [LARGE SCALE GENOMIC DNA]</scope>
    <source>
        <strain>N315</strain>
    </source>
</reference>
<reference key="2">
    <citation type="submission" date="2007-10" db="UniProtKB">
        <title>Shotgun proteomic analysis of total and membrane protein extracts of S. aureus strain N315.</title>
        <authorList>
            <person name="Vaezzadeh A.R."/>
            <person name="Deshusses J."/>
            <person name="Lescuyer P."/>
            <person name="Hochstrasser D.F."/>
        </authorList>
    </citation>
    <scope>IDENTIFICATION BY MASS SPECTROMETRY [LARGE SCALE ANALYSIS]</scope>
    <source>
        <strain>N315</strain>
    </source>
</reference>
<accession>Q7A6T6</accession>
<protein>
    <recommendedName>
        <fullName>Putative lipid kinase SA0681</fullName>
        <ecNumber>2.7.1.-</ecNumber>
    </recommendedName>
</protein>
<gene>
    <name type="ordered locus">SA0681</name>
</gene>
<evidence type="ECO:0000250" key="1"/>
<evidence type="ECO:0000255" key="2">
    <source>
        <dbReference type="PROSITE-ProRule" id="PRU00783"/>
    </source>
</evidence>
<evidence type="ECO:0000305" key="3"/>
<organism>
    <name type="scientific">Staphylococcus aureus (strain N315)</name>
    <dbReference type="NCBI Taxonomy" id="158879"/>
    <lineage>
        <taxon>Bacteria</taxon>
        <taxon>Bacillati</taxon>
        <taxon>Bacillota</taxon>
        <taxon>Bacilli</taxon>
        <taxon>Bacillales</taxon>
        <taxon>Staphylococcaceae</taxon>
        <taxon>Staphylococcus</taxon>
    </lineage>
</organism>
<dbReference type="EC" id="2.7.1.-"/>
<dbReference type="EMBL" id="BA000018">
    <property type="protein sequence ID" value="BAB41914.1"/>
    <property type="molecule type" value="Genomic_DNA"/>
</dbReference>
<dbReference type="PIR" id="G89844">
    <property type="entry name" value="G89844"/>
</dbReference>
<dbReference type="RefSeq" id="WP_000429006.1">
    <property type="nucleotide sequence ID" value="NC_002745.2"/>
</dbReference>
<dbReference type="SMR" id="Q7A6T6"/>
<dbReference type="EnsemblBacteria" id="BAB41914">
    <property type="protein sequence ID" value="BAB41914"/>
    <property type="gene ID" value="BAB41914"/>
</dbReference>
<dbReference type="KEGG" id="sau:SA0681"/>
<dbReference type="HOGENOM" id="CLU_045532_1_0_9"/>
<dbReference type="GO" id="GO:0005886">
    <property type="term" value="C:plasma membrane"/>
    <property type="evidence" value="ECO:0007669"/>
    <property type="project" value="TreeGrafter"/>
</dbReference>
<dbReference type="GO" id="GO:0005524">
    <property type="term" value="F:ATP binding"/>
    <property type="evidence" value="ECO:0007669"/>
    <property type="project" value="UniProtKB-KW"/>
</dbReference>
<dbReference type="GO" id="GO:0004143">
    <property type="term" value="F:ATP-dependent diacylglycerol kinase activity"/>
    <property type="evidence" value="ECO:0007669"/>
    <property type="project" value="TreeGrafter"/>
</dbReference>
<dbReference type="GO" id="GO:0046872">
    <property type="term" value="F:metal ion binding"/>
    <property type="evidence" value="ECO:0007669"/>
    <property type="project" value="UniProtKB-KW"/>
</dbReference>
<dbReference type="GO" id="GO:0008654">
    <property type="term" value="P:phospholipid biosynthetic process"/>
    <property type="evidence" value="ECO:0007669"/>
    <property type="project" value="UniProtKB-KW"/>
</dbReference>
<dbReference type="Gene3D" id="2.60.200.40">
    <property type="match status" value="1"/>
</dbReference>
<dbReference type="Gene3D" id="3.40.50.10330">
    <property type="entry name" value="Probable inorganic polyphosphate/atp-NAD kinase, domain 1"/>
    <property type="match status" value="1"/>
</dbReference>
<dbReference type="InterPro" id="IPR017438">
    <property type="entry name" value="ATP-NAD_kinase_N"/>
</dbReference>
<dbReference type="InterPro" id="IPR005218">
    <property type="entry name" value="Diacylglycerol/lipid_kinase"/>
</dbReference>
<dbReference type="InterPro" id="IPR001206">
    <property type="entry name" value="Diacylglycerol_kinase_cat_dom"/>
</dbReference>
<dbReference type="InterPro" id="IPR050187">
    <property type="entry name" value="Lipid_Phosphate_FormReg"/>
</dbReference>
<dbReference type="InterPro" id="IPR016064">
    <property type="entry name" value="NAD/diacylglycerol_kinase_sf"/>
</dbReference>
<dbReference type="InterPro" id="IPR045540">
    <property type="entry name" value="YegS/DAGK_C"/>
</dbReference>
<dbReference type="NCBIfam" id="TIGR00147">
    <property type="entry name" value="YegS/Rv2252/BmrU family lipid kinase"/>
    <property type="match status" value="1"/>
</dbReference>
<dbReference type="PANTHER" id="PTHR12358:SF106">
    <property type="entry name" value="LIPID KINASE YEGS"/>
    <property type="match status" value="1"/>
</dbReference>
<dbReference type="PANTHER" id="PTHR12358">
    <property type="entry name" value="SPHINGOSINE KINASE"/>
    <property type="match status" value="1"/>
</dbReference>
<dbReference type="Pfam" id="PF00781">
    <property type="entry name" value="DAGK_cat"/>
    <property type="match status" value="1"/>
</dbReference>
<dbReference type="Pfam" id="PF19279">
    <property type="entry name" value="YegS_C"/>
    <property type="match status" value="1"/>
</dbReference>
<dbReference type="SMART" id="SM00046">
    <property type="entry name" value="DAGKc"/>
    <property type="match status" value="1"/>
</dbReference>
<dbReference type="SUPFAM" id="SSF111331">
    <property type="entry name" value="NAD kinase/diacylglycerol kinase-like"/>
    <property type="match status" value="1"/>
</dbReference>
<dbReference type="PROSITE" id="PS50146">
    <property type="entry name" value="DAGK"/>
    <property type="match status" value="1"/>
</dbReference>
<comment type="function">
    <text evidence="1">May catalyze the ATP-dependent phosphorylation of lipids other than diacylglycerol (DAG).</text>
</comment>
<comment type="cofactor">
    <cofactor evidence="1">
        <name>Mg(2+)</name>
        <dbReference type="ChEBI" id="CHEBI:18420"/>
    </cofactor>
    <text evidence="1">Binds 1 Mg(2+) ion per subunit. This ion appears to have a structural role and is required for catalytic activity.</text>
</comment>
<comment type="similarity">
    <text evidence="3">Belongs to the diacylglycerol/lipid kinase family.</text>
</comment>
<proteinExistence type="evidence at protein level"/>
<keyword id="KW-0067">ATP-binding</keyword>
<keyword id="KW-0418">Kinase</keyword>
<keyword id="KW-0444">Lipid biosynthesis</keyword>
<keyword id="KW-0443">Lipid metabolism</keyword>
<keyword id="KW-0460">Magnesium</keyword>
<keyword id="KW-0479">Metal-binding</keyword>
<keyword id="KW-0547">Nucleotide-binding</keyword>
<keyword id="KW-0594">Phospholipid biosynthesis</keyword>
<keyword id="KW-1208">Phospholipid metabolism</keyword>
<keyword id="KW-0808">Transferase</keyword>
<feature type="chain" id="PRO_0000386514" description="Putative lipid kinase SA0681">
    <location>
        <begin position="1"/>
        <end position="305"/>
    </location>
</feature>
<feature type="domain" description="DAGKc" evidence="2">
    <location>
        <begin position="3"/>
        <end position="139"/>
    </location>
</feature>
<feature type="active site" description="Proton acceptor" evidence="1">
    <location>
        <position position="281"/>
    </location>
</feature>
<feature type="binding site" evidence="2">
    <location>
        <position position="44"/>
    </location>
    <ligand>
        <name>ATP</name>
        <dbReference type="ChEBI" id="CHEBI:30616"/>
    </ligand>
</feature>
<feature type="binding site" evidence="2">
    <location>
        <begin position="74"/>
        <end position="80"/>
    </location>
    <ligand>
        <name>ATP</name>
        <dbReference type="ChEBI" id="CHEBI:30616"/>
    </ligand>
</feature>
<feature type="binding site" evidence="2">
    <location>
        <position position="101"/>
    </location>
    <ligand>
        <name>ATP</name>
        <dbReference type="ChEBI" id="CHEBI:30616"/>
    </ligand>
</feature>
<feature type="binding site" evidence="1">
    <location>
        <position position="220"/>
    </location>
    <ligand>
        <name>Mg(2+)</name>
        <dbReference type="ChEBI" id="CHEBI:18420"/>
    </ligand>
</feature>
<feature type="binding site" evidence="1">
    <location>
        <position position="223"/>
    </location>
    <ligand>
        <name>Mg(2+)</name>
        <dbReference type="ChEBI" id="CHEBI:18420"/>
    </ligand>
</feature>
<feature type="binding site" evidence="1">
    <location>
        <position position="225"/>
    </location>
    <ligand>
        <name>Mg(2+)</name>
        <dbReference type="ChEBI" id="CHEBI:18420"/>
    </ligand>
</feature>